<keyword id="KW-0378">Hydrolase</keyword>
<keyword id="KW-0479">Metal-binding</keyword>
<keyword id="KW-0482">Metalloprotease</keyword>
<keyword id="KW-0645">Protease</keyword>
<keyword id="KW-0862">Zinc</keyword>
<name>Y3399_CLOBJ</name>
<evidence type="ECO:0000255" key="1">
    <source>
        <dbReference type="PROSITE-ProRule" id="PRU01182"/>
    </source>
</evidence>
<evidence type="ECO:0000305" key="2"/>
<protein>
    <recommendedName>
        <fullName>UPF0758 protein CLM_3399</fullName>
    </recommendedName>
</protein>
<accession>C1FVY2</accession>
<feature type="chain" id="PRO_1000195290" description="UPF0758 protein CLM_3399">
    <location>
        <begin position="1"/>
        <end position="228"/>
    </location>
</feature>
<feature type="domain" description="MPN" evidence="1">
    <location>
        <begin position="106"/>
        <end position="228"/>
    </location>
</feature>
<feature type="short sequence motif" description="JAMM motif" evidence="1">
    <location>
        <begin position="177"/>
        <end position="190"/>
    </location>
</feature>
<feature type="binding site" evidence="1">
    <location>
        <position position="177"/>
    </location>
    <ligand>
        <name>Zn(2+)</name>
        <dbReference type="ChEBI" id="CHEBI:29105"/>
        <note>catalytic</note>
    </ligand>
</feature>
<feature type="binding site" evidence="1">
    <location>
        <position position="179"/>
    </location>
    <ligand>
        <name>Zn(2+)</name>
        <dbReference type="ChEBI" id="CHEBI:29105"/>
        <note>catalytic</note>
    </ligand>
</feature>
<feature type="binding site" evidence="1">
    <location>
        <position position="190"/>
    </location>
    <ligand>
        <name>Zn(2+)</name>
        <dbReference type="ChEBI" id="CHEBI:29105"/>
        <note>catalytic</note>
    </ligand>
</feature>
<organism>
    <name type="scientific">Clostridium botulinum (strain Kyoto / Type A2)</name>
    <dbReference type="NCBI Taxonomy" id="536232"/>
    <lineage>
        <taxon>Bacteria</taxon>
        <taxon>Bacillati</taxon>
        <taxon>Bacillota</taxon>
        <taxon>Clostridia</taxon>
        <taxon>Eubacteriales</taxon>
        <taxon>Clostridiaceae</taxon>
        <taxon>Clostridium</taxon>
    </lineage>
</organism>
<sequence>MDNNFKIKDLPKNERPQERLIRYGAEVLSNSELLAVILRTGTKNQNIMMLASSLIKETGGLDQLFNQSIEELTKIKGIGVTKAVQILALSELSKRFKTYKSGNEYKINTPLDVSNLVMEDMKYLKQEKLKILILNTKNIVTYIRDVFIGTLNSSIVHPREIFCEAIKKNGASIIICHNHPSGDPTPSKEDINITLRLKECGKLIGIDLLDHIIIGENKYVSMKEKGTI</sequence>
<comment type="similarity">
    <text evidence="2">Belongs to the UPF0758 family.</text>
</comment>
<proteinExistence type="inferred from homology"/>
<dbReference type="EMBL" id="CP001581">
    <property type="protein sequence ID" value="ACO85334.1"/>
    <property type="molecule type" value="Genomic_DNA"/>
</dbReference>
<dbReference type="SMR" id="C1FVY2"/>
<dbReference type="KEGG" id="cby:CLM_3399"/>
<dbReference type="eggNOG" id="COG2003">
    <property type="taxonomic scope" value="Bacteria"/>
</dbReference>
<dbReference type="HOGENOM" id="CLU_073529_0_2_9"/>
<dbReference type="Proteomes" id="UP000001374">
    <property type="component" value="Chromosome"/>
</dbReference>
<dbReference type="GO" id="GO:0046872">
    <property type="term" value="F:metal ion binding"/>
    <property type="evidence" value="ECO:0007669"/>
    <property type="project" value="UniProtKB-KW"/>
</dbReference>
<dbReference type="GO" id="GO:0008237">
    <property type="term" value="F:metallopeptidase activity"/>
    <property type="evidence" value="ECO:0007669"/>
    <property type="project" value="UniProtKB-KW"/>
</dbReference>
<dbReference type="GO" id="GO:0006508">
    <property type="term" value="P:proteolysis"/>
    <property type="evidence" value="ECO:0007669"/>
    <property type="project" value="UniProtKB-KW"/>
</dbReference>
<dbReference type="CDD" id="cd08071">
    <property type="entry name" value="MPN_DUF2466"/>
    <property type="match status" value="1"/>
</dbReference>
<dbReference type="Gene3D" id="1.10.150.20">
    <property type="entry name" value="5' to 3' exonuclease, C-terminal subdomain"/>
    <property type="match status" value="1"/>
</dbReference>
<dbReference type="Gene3D" id="3.40.140.10">
    <property type="entry name" value="Cytidine Deaminase, domain 2"/>
    <property type="match status" value="1"/>
</dbReference>
<dbReference type="InterPro" id="IPR037518">
    <property type="entry name" value="MPN"/>
</dbReference>
<dbReference type="InterPro" id="IPR025657">
    <property type="entry name" value="RadC_JAB"/>
</dbReference>
<dbReference type="InterPro" id="IPR010994">
    <property type="entry name" value="RuvA_2-like"/>
</dbReference>
<dbReference type="InterPro" id="IPR001405">
    <property type="entry name" value="UPF0758"/>
</dbReference>
<dbReference type="InterPro" id="IPR020891">
    <property type="entry name" value="UPF0758_CS"/>
</dbReference>
<dbReference type="InterPro" id="IPR046778">
    <property type="entry name" value="UPF0758_N"/>
</dbReference>
<dbReference type="NCBIfam" id="NF000642">
    <property type="entry name" value="PRK00024.1"/>
    <property type="match status" value="1"/>
</dbReference>
<dbReference type="NCBIfam" id="TIGR00608">
    <property type="entry name" value="radc"/>
    <property type="match status" value="1"/>
</dbReference>
<dbReference type="PANTHER" id="PTHR30471">
    <property type="entry name" value="DNA REPAIR PROTEIN RADC"/>
    <property type="match status" value="1"/>
</dbReference>
<dbReference type="PANTHER" id="PTHR30471:SF3">
    <property type="entry name" value="UPF0758 PROTEIN YEES-RELATED"/>
    <property type="match status" value="1"/>
</dbReference>
<dbReference type="Pfam" id="PF04002">
    <property type="entry name" value="RadC"/>
    <property type="match status" value="1"/>
</dbReference>
<dbReference type="Pfam" id="PF20582">
    <property type="entry name" value="UPF0758_N"/>
    <property type="match status" value="1"/>
</dbReference>
<dbReference type="SUPFAM" id="SSF102712">
    <property type="entry name" value="JAB1/MPN domain"/>
    <property type="match status" value="1"/>
</dbReference>
<dbReference type="SUPFAM" id="SSF47781">
    <property type="entry name" value="RuvA domain 2-like"/>
    <property type="match status" value="1"/>
</dbReference>
<dbReference type="PROSITE" id="PS50249">
    <property type="entry name" value="MPN"/>
    <property type="match status" value="1"/>
</dbReference>
<dbReference type="PROSITE" id="PS01302">
    <property type="entry name" value="UPF0758"/>
    <property type="match status" value="1"/>
</dbReference>
<reference key="1">
    <citation type="submission" date="2008-10" db="EMBL/GenBank/DDBJ databases">
        <title>Genome sequence of Clostridium botulinum A2 Kyoto.</title>
        <authorList>
            <person name="Shrivastava S."/>
            <person name="Brinkac L.M."/>
            <person name="Brown J.L."/>
            <person name="Bruce D."/>
            <person name="Detter C.C."/>
            <person name="Johnson E.A."/>
            <person name="Munk C.A."/>
            <person name="Smith L.A."/>
            <person name="Smith T.J."/>
            <person name="Sutton G."/>
            <person name="Brettin T.S."/>
        </authorList>
    </citation>
    <scope>NUCLEOTIDE SEQUENCE [LARGE SCALE GENOMIC DNA]</scope>
    <source>
        <strain>Kyoto / Type A2</strain>
    </source>
</reference>
<gene>
    <name type="ordered locus">CLM_3399</name>
</gene>